<organism>
    <name type="scientific">Murine coronavirus (strain JHM)</name>
    <name type="common">MHV-JHM</name>
    <name type="synonym">Murine hepatitis virus</name>
    <dbReference type="NCBI Taxonomy" id="11144"/>
    <lineage>
        <taxon>Viruses</taxon>
        <taxon>Riboviria</taxon>
        <taxon>Orthornavirae</taxon>
        <taxon>Pisuviricota</taxon>
        <taxon>Pisoniviricetes</taxon>
        <taxon>Nidovirales</taxon>
        <taxon>Cornidovirineae</taxon>
        <taxon>Coronaviridae</taxon>
        <taxon>Orthocoronavirinae</taxon>
        <taxon>Betacoronavirus</taxon>
        <taxon>Embecovirus</taxon>
        <taxon>Murine coronavirus</taxon>
    </lineage>
</organism>
<gene>
    <name evidence="1" type="primary">HE</name>
    <name type="ORF">2b</name>
</gene>
<evidence type="ECO:0000255" key="1">
    <source>
        <dbReference type="HAMAP-Rule" id="MF_04207"/>
    </source>
</evidence>
<reference key="1">
    <citation type="journal article" date="1991" name="J. Gen. Virol.">
        <title>High level transient expression of the murine coronavirus haemagglutinin-esterase.</title>
        <authorList>
            <person name="Pfleiderer M."/>
            <person name="Routledge E."/>
            <person name="Herrler G."/>
            <person name="Siddell S.G."/>
        </authorList>
    </citation>
    <scope>NUCLEOTIDE SEQUENCE [GENOMIC RNA]</scope>
</reference>
<reference key="2">
    <citation type="journal article" date="1989" name="J. Virol.">
        <title>Identification of a new transcriptional initiation site and the corresponding functional gene 2b in the murine coronavirus RNA genome.</title>
        <authorList>
            <person name="Shieh C.-K."/>
            <person name="Lee H.-J."/>
            <person name="Yokomori K."/>
            <person name="la Monica N."/>
            <person name="Makino S."/>
            <person name="Lai M.M.C."/>
        </authorList>
    </citation>
    <scope>NUCLEOTIDE SEQUENCE [GENOMIC RNA]</scope>
</reference>
<reference key="3">
    <citation type="journal article" date="1990" name="Adv. Exp. Med. Biol.">
        <title>Functional analysis of the coronavirus MHV-JHM surface glycoproteins in vaccinia virus recombinants.</title>
        <authorList>
            <person name="Pfleiderer M."/>
            <person name="Routledge E."/>
            <person name="Siddell S.G."/>
        </authorList>
    </citation>
    <scope>NUCLEOTIDE SEQUENCE [GENOMIC RNA]</scope>
</reference>
<reference key="4">
    <citation type="journal article" date="2002" name="J. Gen. Virol.">
        <title>The sialate-4-O-acetylesterases of coronaviruses related to mouse hepatitis virus: a proposal to reorganize group 2 Coronaviridae.</title>
        <authorList>
            <person name="Wurzer W.J."/>
            <person name="Obojes K."/>
            <person name="Vlasak R."/>
        </authorList>
    </citation>
    <scope>CHARACTERIZATION</scope>
</reference>
<keyword id="KW-1015">Disulfide bond</keyword>
<keyword id="KW-0325">Glycoprotein</keyword>
<keyword id="KW-0348">Hemagglutinin</keyword>
<keyword id="KW-1032">Host cell membrane</keyword>
<keyword id="KW-1043">Host membrane</keyword>
<keyword id="KW-0378">Hydrolase</keyword>
<keyword id="KW-0472">Membrane</keyword>
<keyword id="KW-0732">Signal</keyword>
<keyword id="KW-0812">Transmembrane</keyword>
<keyword id="KW-1133">Transmembrane helix</keyword>
<keyword id="KW-0261">Viral envelope protein</keyword>
<keyword id="KW-0946">Virion</keyword>
<name>HEMA_CVMJH</name>
<proteinExistence type="evidence at protein level"/>
<feature type="signal peptide" evidence="1">
    <location>
        <begin position="1"/>
        <end position="22"/>
    </location>
</feature>
<feature type="chain" id="PRO_0000037147" description="Hemagglutinin-esterase" evidence="1">
    <location>
        <begin position="23"/>
        <end position="439"/>
    </location>
</feature>
<feature type="topological domain" description="Virion surface" evidence="1">
    <location>
        <begin position="23"/>
        <end position="407"/>
    </location>
</feature>
<feature type="transmembrane region" description="Helical" evidence="1">
    <location>
        <begin position="408"/>
        <end position="428"/>
    </location>
</feature>
<feature type="topological domain" description="Intravirion" evidence="1">
    <location>
        <begin position="429"/>
        <end position="439"/>
    </location>
</feature>
<feature type="region of interest" description="Esterase domain 1" evidence="1">
    <location>
        <begin position="12"/>
        <end position="132"/>
    </location>
</feature>
<feature type="region of interest" description="Receptor binding" evidence="1">
    <location>
        <begin position="133"/>
        <end position="281"/>
    </location>
</feature>
<feature type="region of interest" description="Esterase domain 2" evidence="1">
    <location>
        <begin position="282"/>
        <end position="395"/>
    </location>
</feature>
<feature type="active site" description="Nucleophile" evidence="1">
    <location>
        <position position="45"/>
    </location>
</feature>
<feature type="active site" description="Charge relay system" evidence="1">
    <location>
        <position position="342"/>
    </location>
</feature>
<feature type="active site" description="Charge relay system" evidence="1">
    <location>
        <position position="345"/>
    </location>
</feature>
<feature type="glycosylation site" description="N-linked (GlcNAc...) asparagine; by host" evidence="1">
    <location>
        <position position="94"/>
    </location>
</feature>
<feature type="glycosylation site" description="N-linked (GlcNAc...) asparagine; by host" evidence="1">
    <location>
        <position position="196"/>
    </location>
</feature>
<feature type="glycosylation site" description="N-linked (GlcNAc...) asparagine; by host" evidence="1">
    <location>
        <position position="246"/>
    </location>
</feature>
<feature type="glycosylation site" description="N-linked (GlcNAc...) asparagine; by host" evidence="1">
    <location>
        <position position="309"/>
    </location>
</feature>
<feature type="glycosylation site" description="N-linked (GlcNAc...) asparagine; by host" evidence="1">
    <location>
        <position position="316"/>
    </location>
</feature>
<feature type="glycosylation site" description="N-linked (GlcNAc...) asparagine; by host" evidence="1">
    <location>
        <position position="331"/>
    </location>
</feature>
<feature type="glycosylation site" description="N-linked (GlcNAc...) asparagine; by host" evidence="1">
    <location>
        <position position="360"/>
    </location>
</feature>
<feature type="glycosylation site" description="N-linked (GlcNAc...) asparagine; by host" evidence="1">
    <location>
        <position position="374"/>
    </location>
</feature>
<feature type="disulfide bond" evidence="1">
    <location>
        <begin position="49"/>
        <end position="70"/>
    </location>
</feature>
<feature type="disulfide bond" evidence="1">
    <location>
        <begin position="118"/>
        <end position="167"/>
    </location>
</feature>
<feature type="disulfide bond" evidence="1">
    <location>
        <begin position="202"/>
        <end position="291"/>
    </location>
</feature>
<feature type="disulfide bond" evidence="1">
    <location>
        <begin position="210"/>
        <end position="264"/>
    </location>
</feature>
<feature type="disulfide bond" evidence="1">
    <location>
        <begin position="322"/>
        <end position="327"/>
    </location>
</feature>
<feature type="disulfide bond" evidence="1">
    <location>
        <begin position="363"/>
        <end position="387"/>
    </location>
</feature>
<feature type="sequence conflict" description="In Ref. 2; AAA46442." ref="2">
    <original>R</original>
    <variation>A</variation>
    <location>
        <position position="133"/>
    </location>
</feature>
<feature type="sequence conflict" description="In Ref. 2." ref="2">
    <original>F</original>
    <variation>L</variation>
    <location>
        <position position="245"/>
    </location>
</feature>
<feature type="sequence conflict" description="In Ref. 2." ref="2">
    <original>S</original>
    <variation>C</variation>
    <location>
        <position position="247"/>
    </location>
</feature>
<accession>Q83356</accession>
<accession>Q83353</accession>
<organismHost>
    <name type="scientific">Mus musculus</name>
    <name type="common">Mouse</name>
    <dbReference type="NCBI Taxonomy" id="10090"/>
</organismHost>
<protein>
    <recommendedName>
        <fullName evidence="1">Hemagglutinin-esterase</fullName>
        <shortName evidence="1">HE protein</shortName>
        <ecNumber evidence="1">3.1.1.53</ecNumber>
    </recommendedName>
    <alternativeName>
        <fullName evidence="1">E3 glycoprotein</fullName>
    </alternativeName>
</protein>
<comment type="function">
    <text evidence="1">Structural protein that makes short spikes at the surface of the virus. Contains receptor binding and receptor-destroying activities. Mediates de-O-acetylation of N-acetyl-4-O-acetylneuraminic acid, which is probably the receptor determinant recognized by the virus on the surface of erythrocytes and susceptible cells. This receptor-destroying activity is important for virus release as it probably helps preventing self-aggregation and ensures the efficient spread of the progeny virus from cell to cell. May serve as a secondary viral attachment protein for initiating infection, the spike protein being the major one. May become a target for both the humoral and the cellular branches of the immune system.</text>
</comment>
<comment type="catalytic activity">
    <reaction evidence="1">
        <text>N-acetyl-9-O-acetylneuraminate + H2O = N-acetylneuraminate + acetate + H(+)</text>
        <dbReference type="Rhea" id="RHEA:22600"/>
        <dbReference type="ChEBI" id="CHEBI:15377"/>
        <dbReference type="ChEBI" id="CHEBI:15378"/>
        <dbReference type="ChEBI" id="CHEBI:28999"/>
        <dbReference type="ChEBI" id="CHEBI:30089"/>
        <dbReference type="ChEBI" id="CHEBI:35418"/>
        <dbReference type="EC" id="3.1.1.53"/>
    </reaction>
</comment>
<comment type="catalytic activity">
    <reaction evidence="1">
        <text>N-acetyl-4-O-acetylneuraminate + H2O = N-acetylneuraminate + acetate + H(+)</text>
        <dbReference type="Rhea" id="RHEA:25564"/>
        <dbReference type="ChEBI" id="CHEBI:15377"/>
        <dbReference type="ChEBI" id="CHEBI:15378"/>
        <dbReference type="ChEBI" id="CHEBI:29006"/>
        <dbReference type="ChEBI" id="CHEBI:30089"/>
        <dbReference type="ChEBI" id="CHEBI:35418"/>
        <dbReference type="EC" id="3.1.1.53"/>
    </reaction>
</comment>
<comment type="subunit">
    <text evidence="1">Homodimer; disulfide-linked. Forms a complex with the M protein in the pre-Golgi. Associates then with S-M complex to form a ternary complex S-M-HE.</text>
</comment>
<comment type="subcellular location">
    <subcellularLocation>
        <location evidence="1">Virion membrane</location>
        <topology evidence="1">Single-pass type I membrane protein</topology>
    </subcellularLocation>
    <subcellularLocation>
        <location evidence="1">Host cell membrane</location>
        <topology evidence="1">Single-pass type I membrane protein</topology>
    </subcellularLocation>
    <text evidence="1">In infected cells becomes incorporated into the envelope of virions during virus assembly at the endoplasmic reticulum and cis Golgi. However, some may escape incorporation into virions and subsequently migrate to the cell surface.</text>
</comment>
<comment type="PTM">
    <text evidence="1">N-glycosylated in the host RER.</text>
</comment>
<comment type="similarity">
    <text evidence="1">Belongs to the influenza type C/coronaviruses hemagglutinin-esterase family.</text>
</comment>
<sequence length="439" mass="49110">MGSTCIAMAPRTLLLLIGCQLVFGFNEPLNIVSHLNDDWFLFGDSRSDCTYVENNGHPKLDWLDLDPKLCNSGKISAKSGNSLFRSFHFTDFYNYTGEGDQIVFYEGVNFSPNHGFKCLAYGDNKRWMGNKARFYARVYEKMAQYRSLSFVNVPYAYGGKAKPTSICKHKTLTLNNPTFISKESNYVDYYYESEANFTLAGCDEFIVPLCVFNGHSKGSSSDPANKYYMDSQSYYNMDTGVLYGFNSTLDVGNTAKDPGLDLTCRYLALTPGNYKAVSLEYLLSLPSKAICLRKPKRFMPVQVVDSRWNSTRQSDNMTAVACQLPYCFFRNTSADYSGGTHDVHHGDFHFRQLLSGLLLNVSCIAQQGAFLYNNVSSSWPAYGYGQCPTAANIGYMAPVCIYDPLPVVLLGVLLGIAVLIIVFLILYFMTDSGVRLHEA</sequence>
<dbReference type="EC" id="3.1.1.53" evidence="1"/>
<dbReference type="EMBL" id="D00764">
    <property type="protein sequence ID" value="BAA00661.1"/>
    <property type="molecule type" value="Genomic_RNA"/>
</dbReference>
<dbReference type="EMBL" id="M28348">
    <property type="protein sequence ID" value="AAA46442.1"/>
    <property type="molecule type" value="Genomic_RNA"/>
</dbReference>
<dbReference type="PIR" id="JQ0997">
    <property type="entry name" value="JQ0997"/>
</dbReference>
<dbReference type="SMR" id="Q83356"/>
<dbReference type="GlyCosmos" id="Q83356">
    <property type="glycosylation" value="8 sites, No reported glycans"/>
</dbReference>
<dbReference type="Proteomes" id="UP000007193">
    <property type="component" value="Genome"/>
</dbReference>
<dbReference type="GO" id="GO:0020002">
    <property type="term" value="C:host cell plasma membrane"/>
    <property type="evidence" value="ECO:0007669"/>
    <property type="project" value="UniProtKB-SubCell"/>
</dbReference>
<dbReference type="GO" id="GO:0016020">
    <property type="term" value="C:membrane"/>
    <property type="evidence" value="ECO:0007669"/>
    <property type="project" value="UniProtKB-UniRule"/>
</dbReference>
<dbReference type="GO" id="GO:0019031">
    <property type="term" value="C:viral envelope"/>
    <property type="evidence" value="ECO:0007669"/>
    <property type="project" value="UniProtKB-UniRule"/>
</dbReference>
<dbReference type="GO" id="GO:0055036">
    <property type="term" value="C:virion membrane"/>
    <property type="evidence" value="ECO:0007669"/>
    <property type="project" value="UniProtKB-SubCell"/>
</dbReference>
<dbReference type="GO" id="GO:0046789">
    <property type="term" value="F:host cell surface receptor binding"/>
    <property type="evidence" value="ECO:0007669"/>
    <property type="project" value="UniProtKB-UniRule"/>
</dbReference>
<dbReference type="GO" id="GO:0106331">
    <property type="term" value="F:sialate 4-O-acetylesterase activity"/>
    <property type="evidence" value="ECO:0007669"/>
    <property type="project" value="RHEA"/>
</dbReference>
<dbReference type="GO" id="GO:0106330">
    <property type="term" value="F:sialate 9-O-acetylesterase activity"/>
    <property type="evidence" value="ECO:0007669"/>
    <property type="project" value="RHEA"/>
</dbReference>
<dbReference type="GO" id="GO:0019064">
    <property type="term" value="P:fusion of virus membrane with host plasma membrane"/>
    <property type="evidence" value="ECO:0007669"/>
    <property type="project" value="UniProtKB-UniRule"/>
</dbReference>
<dbReference type="HAMAP" id="MF_04207">
    <property type="entry name" value="BETA_CORONA_HE"/>
    <property type="match status" value="1"/>
</dbReference>
<dbReference type="InterPro" id="IPR008980">
    <property type="entry name" value="Capsid_hemagglutn"/>
</dbReference>
<dbReference type="InterPro" id="IPR042545">
    <property type="entry name" value="HEMA"/>
</dbReference>
<dbReference type="InterPro" id="IPR007142">
    <property type="entry name" value="Hemagglutn-estrase_core"/>
</dbReference>
<dbReference type="InterPro" id="IPR003860">
    <property type="entry name" value="Hemagglutn-estrase_hemagglutn"/>
</dbReference>
<dbReference type="Pfam" id="PF03996">
    <property type="entry name" value="Hema_esterase"/>
    <property type="match status" value="1"/>
</dbReference>
<dbReference type="Pfam" id="PF02710">
    <property type="entry name" value="Hema_HEFG"/>
    <property type="match status" value="1"/>
</dbReference>
<dbReference type="SUPFAM" id="SSF52266">
    <property type="entry name" value="SGNH hydrolase"/>
    <property type="match status" value="1"/>
</dbReference>
<dbReference type="SUPFAM" id="SSF49818">
    <property type="entry name" value="Viral protein domain"/>
    <property type="match status" value="1"/>
</dbReference>